<feature type="chain" id="PRO_0000057952" description="Nuclear receptor-interacting protein 1">
    <location>
        <begin position="1"/>
        <end position="1161"/>
    </location>
</feature>
<feature type="region of interest" description="Interaction with ZNF366" evidence="1">
    <location>
        <begin position="1"/>
        <end position="416"/>
    </location>
</feature>
<feature type="region of interest" description="Disordered" evidence="4">
    <location>
        <begin position="34"/>
        <end position="68"/>
    </location>
</feature>
<feature type="region of interest" description="Repression domain 1" evidence="2">
    <location>
        <begin position="78"/>
        <end position="335"/>
    </location>
</feature>
<feature type="region of interest" description="Disordered" evidence="4">
    <location>
        <begin position="393"/>
        <end position="436"/>
    </location>
</feature>
<feature type="region of interest" description="Repression domain 2" evidence="2">
    <location>
        <begin position="411"/>
        <end position="701"/>
    </location>
</feature>
<feature type="region of interest" description="Required for targeting to small nuclear foci" evidence="2">
    <location>
        <begin position="432"/>
        <end position="473"/>
    </location>
</feature>
<feature type="region of interest" description="Disordered" evidence="4">
    <location>
        <begin position="517"/>
        <end position="559"/>
    </location>
</feature>
<feature type="region of interest" description="Disordered" evidence="4">
    <location>
        <begin position="604"/>
        <end position="623"/>
    </location>
</feature>
<feature type="region of interest" description="Disordered" evidence="4">
    <location>
        <begin position="639"/>
        <end position="702"/>
    </location>
</feature>
<feature type="region of interest" description="Disordered" evidence="4">
    <location>
        <begin position="717"/>
        <end position="747"/>
    </location>
</feature>
<feature type="region of interest" description="Repression domain 3" evidence="2">
    <location>
        <begin position="736"/>
        <end position="886"/>
    </location>
</feature>
<feature type="region of interest" description="Interaction with ZNF366" evidence="1">
    <location>
        <begin position="754"/>
        <end position="1161"/>
    </location>
</feature>
<feature type="region of interest" description="Disordered" evidence="4">
    <location>
        <begin position="829"/>
        <end position="848"/>
    </location>
</feature>
<feature type="region of interest" description="Disordered" evidence="4">
    <location>
        <begin position="950"/>
        <end position="976"/>
    </location>
</feature>
<feature type="region of interest" description="Ligand-dependent nuclear receptor binding">
    <location>
        <begin position="1063"/>
        <end position="1076"/>
    </location>
</feature>
<feature type="region of interest" description="Repression domain 4" evidence="2">
    <location>
        <begin position="1121"/>
        <end position="1161"/>
    </location>
</feature>
<feature type="short sequence motif" description="LXXLL motif 1" evidence="3">
    <location>
        <begin position="21"/>
        <end position="25"/>
    </location>
</feature>
<feature type="short sequence motif" description="LXXLL motif 2" evidence="3">
    <location>
        <begin position="133"/>
        <end position="137"/>
    </location>
</feature>
<feature type="short sequence motif" description="LXXLL motif 3" evidence="3">
    <location>
        <begin position="185"/>
        <end position="189"/>
    </location>
</feature>
<feature type="short sequence motif" description="LXXLL motif 4" evidence="3">
    <location>
        <begin position="267"/>
        <end position="271"/>
    </location>
</feature>
<feature type="short sequence motif" description="LXXLL motif 5" evidence="3">
    <location>
        <begin position="382"/>
        <end position="386"/>
    </location>
</feature>
<feature type="short sequence motif" description="CTBP-binding; principal site" evidence="2">
    <location>
        <begin position="441"/>
        <end position="447"/>
    </location>
</feature>
<feature type="short sequence motif" description="LXXLL motif 6" evidence="3">
    <location>
        <begin position="501"/>
        <end position="505"/>
    </location>
</feature>
<feature type="short sequence motif" description="CTBP-binding" evidence="2">
    <location>
        <begin position="566"/>
        <end position="570"/>
    </location>
</feature>
<feature type="short sequence motif" description="LXXLL motif 7" evidence="3">
    <location>
        <begin position="714"/>
        <end position="718"/>
    </location>
</feature>
<feature type="short sequence motif" description="LXXLL motif 8" evidence="3">
    <location>
        <begin position="820"/>
        <end position="824"/>
    </location>
</feature>
<feature type="short sequence motif" description="LXXLL motif 9" evidence="3">
    <location>
        <begin position="937"/>
        <end position="941"/>
    </location>
</feature>
<feature type="short sequence motif" description="CTBP-binding" evidence="2">
    <location>
        <begin position="947"/>
        <end position="951"/>
    </location>
</feature>
<feature type="compositionally biased region" description="Polar residues" evidence="4">
    <location>
        <begin position="50"/>
        <end position="68"/>
    </location>
</feature>
<feature type="compositionally biased region" description="Polar residues" evidence="4">
    <location>
        <begin position="517"/>
        <end position="552"/>
    </location>
</feature>
<feature type="compositionally biased region" description="Basic and acidic residues" evidence="4">
    <location>
        <begin position="724"/>
        <end position="747"/>
    </location>
</feature>
<feature type="compositionally biased region" description="Basic and acidic residues" evidence="4">
    <location>
        <begin position="950"/>
        <end position="962"/>
    </location>
</feature>
<feature type="modified residue" description="Phosphoserine" evidence="10">
    <location>
        <position position="104"/>
    </location>
</feature>
<feature type="modified residue" description="N6-acetyllysine; alternate" evidence="11">
    <location>
        <position position="111"/>
    </location>
</feature>
<feature type="modified residue" description="N6-acetyllysine" evidence="11">
    <location>
        <position position="158"/>
    </location>
</feature>
<feature type="modified residue" description="Phosphothreonine" evidence="10">
    <location>
        <position position="207"/>
    </location>
</feature>
<feature type="modified residue" description="Phosphoserine" evidence="2">
    <location>
        <position position="218"/>
    </location>
</feature>
<feature type="modified residue" description="N6-acetyllysine" evidence="11">
    <location>
        <position position="287"/>
    </location>
</feature>
<feature type="modified residue" description="N6-acetyllysine" evidence="11">
    <location>
        <position position="311"/>
    </location>
</feature>
<feature type="modified residue" description="Phosphoserine" evidence="10">
    <location>
        <position position="358"/>
    </location>
</feature>
<feature type="modified residue" description="Phosphoserine" evidence="10">
    <location>
        <position position="380"/>
    </location>
</feature>
<feature type="modified residue" description="N6-acetyllysine" evidence="2">
    <location>
        <position position="447"/>
    </location>
</feature>
<feature type="modified residue" description="N6-acetyllysine" evidence="11">
    <location>
        <position position="482"/>
    </location>
</feature>
<feature type="modified residue" description="Phosphoserine" evidence="10">
    <location>
        <position position="488"/>
    </location>
</feature>
<feature type="modified residue" description="Phosphoserine" evidence="10">
    <location>
        <position position="519"/>
    </location>
</feature>
<feature type="modified residue" description="N6-acetyllysine" evidence="11">
    <location>
        <position position="529"/>
    </location>
</feature>
<feature type="modified residue" description="Phosphoserine" evidence="10">
    <location>
        <position position="531"/>
    </location>
</feature>
<feature type="modified residue" description="Phosphoserine" evidence="10">
    <location>
        <position position="543"/>
    </location>
</feature>
<feature type="modified residue" description="Phosphoserine" evidence="2">
    <location>
        <position position="565"/>
    </location>
</feature>
<feature type="modified residue" description="N6-acetyllysine" evidence="11">
    <location>
        <position position="607"/>
    </location>
</feature>
<feature type="modified residue" description="Phosphoserine" evidence="10">
    <location>
        <position position="672"/>
    </location>
</feature>
<feature type="modified residue" description="Phosphoserine" evidence="2">
    <location>
        <position position="808"/>
    </location>
</feature>
<feature type="modified residue" description="N6-acetyllysine; alternate" evidence="11">
    <location>
        <position position="932"/>
    </location>
</feature>
<feature type="modified residue" description="Phosphoserine" evidence="10">
    <location>
        <position position="1003"/>
    </location>
</feature>
<feature type="cross-link" description="Glycyl lysine isopeptide (Lys-Gly) (interchain with G-Cter in SUMO2); alternate" evidence="2">
    <location>
        <position position="111"/>
    </location>
</feature>
<feature type="cross-link" description="Glycyl lysine isopeptide (Lys-Gly) (interchain with G-Cter in SUMO2)" evidence="2">
    <location>
        <position position="170"/>
    </location>
</feature>
<feature type="cross-link" description="Glycyl lysine isopeptide (Lys-Gly) (interchain with G-Cter in SUMO2)" evidence="2">
    <location>
        <position position="195"/>
    </location>
</feature>
<feature type="cross-link" description="Glycyl lysine isopeptide (Lys-Gly) (interchain with G-Cter in SUMO2)" evidence="2">
    <location>
        <position position="198"/>
    </location>
</feature>
<feature type="cross-link" description="Glycyl lysine isopeptide (Lys-Gly) (interchain with G-Cter in SUMO2)" evidence="2">
    <location>
        <position position="374"/>
    </location>
</feature>
<feature type="cross-link" description="Glycyl lysine isopeptide (Lys-Gly) (interchain with G-Cter in SUMO2)" evidence="2">
    <location>
        <position position="509"/>
    </location>
</feature>
<feature type="cross-link" description="Glycyl lysine isopeptide (Lys-Gly) (interchain with G-Cter in SUMO2)" evidence="2">
    <location>
        <position position="757"/>
    </location>
</feature>
<feature type="cross-link" description="Glycyl lysine isopeptide (Lys-Gly) (interchain with G-Cter in SUMO2)" evidence="2">
    <location>
        <position position="803"/>
    </location>
</feature>
<feature type="cross-link" description="Glycyl lysine isopeptide (Lys-Gly) (interchain with G-Cter in SUMO2)" evidence="2">
    <location>
        <position position="851"/>
    </location>
</feature>
<feature type="cross-link" description="Glycyl lysine isopeptide (Lys-Gly) (interchain with G-Cter in SUMO2)" evidence="2">
    <location>
        <position position="902"/>
    </location>
</feature>
<feature type="cross-link" description="Glycyl lysine isopeptide (Lys-Gly) (interchain with G-Cter in SUMO2); alternate" evidence="2">
    <location>
        <position position="932"/>
    </location>
</feature>
<feature type="cross-link" description="Glycyl lysine isopeptide (Lys-Gly) (interchain with G-Cter in SUMO2)" evidence="2">
    <location>
        <position position="1108"/>
    </location>
</feature>
<feature type="cross-link" description="Glycyl lysine isopeptide (Lys-Gly) (interchain with G-Cter in SUMO2)" evidence="2">
    <location>
        <position position="1118"/>
    </location>
</feature>
<feature type="cross-link" description="Glycyl lysine isopeptide (Lys-Gly) (interchain with G-Cter in SUMO2)" evidence="2">
    <location>
        <position position="1157"/>
    </location>
</feature>
<feature type="mutagenesis site" description="Reduces binding to RAR, RXR and RAR/RXR." evidence="7">
    <original>N</original>
    <variation>G</variation>
    <location>
        <position position="1067"/>
    </location>
</feature>
<feature type="mutagenesis site" description="Abolishes binding to RAR, RXR and RAR/RXR." evidence="7">
    <original>P</original>
    <variation>A</variation>
    <location>
        <position position="1068"/>
    </location>
</feature>
<feature type="mutagenesis site" description="Reduces binding to RAR, RXR and RAR/RXR." evidence="7">
    <original>M</original>
    <variation>I</variation>
    <location>
        <position position="1073"/>
    </location>
</feature>
<feature type="mutagenesis site" description="Abolishes binding to RAR, RXR and RAR/RXR." evidence="7">
    <original>M</original>
    <variation>K</variation>
    <location>
        <position position="1073"/>
    </location>
</feature>
<feature type="mutagenesis site" description="Reduces binding to RAR, RXR and RAR/RXR." evidence="7">
    <original>M</original>
    <variation>L</variation>
    <location>
        <position position="1073"/>
    </location>
</feature>
<feature type="sequence conflict" description="In Ref. 4; AA sequence." evidence="16" ref="4">
    <original>V</original>
    <variation>N</variation>
    <location>
        <position position="106"/>
    </location>
</feature>
<feature type="sequence conflict" description="In Ref. 5; AA sequence." evidence="16" ref="5">
    <original>N</original>
    <variation>NN</variation>
    <location>
        <position position="107"/>
    </location>
</feature>
<feature type="sequence conflict" description="In Ref. 1; AAC69611." evidence="16" ref="1">
    <original>MV</original>
    <variation>IL</variation>
    <location>
        <begin position="119"/>
        <end position="120"/>
    </location>
</feature>
<feature type="sequence conflict" description="In Ref. 1; AAC69611." evidence="16" ref="1">
    <original>K</original>
    <variation>R</variation>
    <location>
        <position position="190"/>
    </location>
</feature>
<feature type="sequence conflict" description="In Ref. 1; AAC69611." evidence="16" ref="1">
    <original>Q</original>
    <variation>E</variation>
    <location>
        <position position="197"/>
    </location>
</feature>
<feature type="sequence conflict" description="In Ref. 1; AAC69611." evidence="16" ref="1">
    <original>G</original>
    <variation>D</variation>
    <location>
        <position position="200"/>
    </location>
</feature>
<feature type="sequence conflict" description="In Ref. 1; AAC69611." evidence="16" ref="1">
    <original>D</original>
    <variation>V</variation>
    <location>
        <position position="522"/>
    </location>
</feature>
<feature type="sequence conflict" description="In Ref. 1; AAC69611." evidence="16" ref="1">
    <original>A</original>
    <variation>V</variation>
    <location>
        <position position="596"/>
    </location>
</feature>
<feature type="sequence conflict" description="In Ref. 1; AAC69611." evidence="16" ref="1">
    <original>S</original>
    <variation>N</variation>
    <location>
        <position position="617"/>
    </location>
</feature>
<feature type="sequence conflict" description="In Ref. 4; AA sequence." evidence="16" ref="4">
    <original>S</original>
    <variation>K</variation>
    <location>
        <position position="629"/>
    </location>
</feature>
<feature type="sequence conflict" description="In Ref. 1; AAC69611." evidence="16" ref="1">
    <original>L</original>
    <variation>Q</variation>
    <location>
        <position position="674"/>
    </location>
</feature>
<feature type="sequence conflict" description="In Ref. 1; AAC69611." evidence="16" ref="1">
    <original>G</original>
    <variation>F</variation>
    <location>
        <position position="818"/>
    </location>
</feature>
<feature type="sequence conflict" description="In Ref. 2; BAE33634." evidence="16" ref="2">
    <original>M</original>
    <variation>I</variation>
    <location>
        <position position="855"/>
    </location>
</feature>
<feature type="sequence conflict" description="In Ref. 1; AAC69611." evidence="16" ref="1">
    <original>S</original>
    <variation>R</variation>
    <location>
        <position position="886"/>
    </location>
</feature>
<feature type="sequence conflict" description="In Ref. 1; AAC69611." evidence="16" ref="1">
    <original>A</original>
    <variation>T</variation>
    <location>
        <position position="1049"/>
    </location>
</feature>
<dbReference type="EMBL" id="AF053062">
    <property type="protein sequence ID" value="AAC69611.1"/>
    <property type="molecule type" value="mRNA"/>
</dbReference>
<dbReference type="EMBL" id="AK036273">
    <property type="protein sequence ID" value="BAC29368.1"/>
    <property type="molecule type" value="mRNA"/>
</dbReference>
<dbReference type="EMBL" id="AK084498">
    <property type="protein sequence ID" value="BAC39197.1"/>
    <property type="molecule type" value="mRNA"/>
</dbReference>
<dbReference type="EMBL" id="AK156233">
    <property type="protein sequence ID" value="BAE33634.1"/>
    <property type="molecule type" value="mRNA"/>
</dbReference>
<dbReference type="EMBL" id="BC060232">
    <property type="protein sequence ID" value="AAH60232.1"/>
    <property type="molecule type" value="mRNA"/>
</dbReference>
<dbReference type="CCDS" id="CCDS28274.1"/>
<dbReference type="RefSeq" id="NP_001345167.1">
    <property type="nucleotide sequence ID" value="NM_001358238.1"/>
</dbReference>
<dbReference type="RefSeq" id="NP_775616.1">
    <property type="nucleotide sequence ID" value="NM_173440.3"/>
</dbReference>
<dbReference type="RefSeq" id="XP_006523113.1">
    <property type="nucleotide sequence ID" value="XM_006523050.4"/>
</dbReference>
<dbReference type="RefSeq" id="XP_006523114.1">
    <property type="nucleotide sequence ID" value="XM_006523051.3"/>
</dbReference>
<dbReference type="RefSeq" id="XP_006523117.1">
    <property type="nucleotide sequence ID" value="XM_006523054.4"/>
</dbReference>
<dbReference type="RefSeq" id="XP_017172509.1">
    <property type="nucleotide sequence ID" value="XM_017317020.3"/>
</dbReference>
<dbReference type="RefSeq" id="XP_036015860.1">
    <property type="nucleotide sequence ID" value="XM_036159967.1"/>
</dbReference>
<dbReference type="BioGRID" id="234576">
    <property type="interactions" value="17"/>
</dbReference>
<dbReference type="CORUM" id="Q8CBD1"/>
<dbReference type="DIP" id="DIP-29280N"/>
<dbReference type="FunCoup" id="Q8CBD1">
    <property type="interactions" value="2395"/>
</dbReference>
<dbReference type="IntAct" id="Q8CBD1">
    <property type="interactions" value="6"/>
</dbReference>
<dbReference type="MINT" id="Q8CBD1"/>
<dbReference type="STRING" id="10090.ENSMUSP00000112959"/>
<dbReference type="GlyGen" id="Q8CBD1">
    <property type="glycosylation" value="1 site"/>
</dbReference>
<dbReference type="iPTMnet" id="Q8CBD1"/>
<dbReference type="PhosphoSitePlus" id="Q8CBD1"/>
<dbReference type="PaxDb" id="10090-ENSMUSP00000051726"/>
<dbReference type="PeptideAtlas" id="Q8CBD1"/>
<dbReference type="ProteomicsDB" id="253016"/>
<dbReference type="Antibodypedia" id="5789">
    <property type="antibodies" value="254 antibodies from 33 providers"/>
</dbReference>
<dbReference type="DNASU" id="268903"/>
<dbReference type="Ensembl" id="ENSMUST00000054178.8">
    <property type="protein sequence ID" value="ENSMUSP00000051726.2"/>
    <property type="gene ID" value="ENSMUSG00000048490.15"/>
</dbReference>
<dbReference type="Ensembl" id="ENSMUST00000121927.8">
    <property type="protein sequence ID" value="ENSMUSP00000112959.2"/>
    <property type="gene ID" value="ENSMUSG00000048490.15"/>
</dbReference>
<dbReference type="GeneID" id="268903"/>
<dbReference type="KEGG" id="mmu:268903"/>
<dbReference type="UCSC" id="uc007zrx.1">
    <property type="organism name" value="mouse"/>
</dbReference>
<dbReference type="AGR" id="MGI:1315213"/>
<dbReference type="CTD" id="8204"/>
<dbReference type="MGI" id="MGI:1315213">
    <property type="gene designation" value="Nrip1"/>
</dbReference>
<dbReference type="VEuPathDB" id="HostDB:ENSMUSG00000048490"/>
<dbReference type="eggNOG" id="ENOG502QS1C">
    <property type="taxonomic scope" value="Eukaryota"/>
</dbReference>
<dbReference type="GeneTree" id="ENSGT00390000007999"/>
<dbReference type="HOGENOM" id="CLU_008553_0_0_1"/>
<dbReference type="InParanoid" id="Q8CBD1"/>
<dbReference type="OMA" id="SPPYACG"/>
<dbReference type="OrthoDB" id="9878150at2759"/>
<dbReference type="PhylomeDB" id="Q8CBD1"/>
<dbReference type="TreeFam" id="TF332210"/>
<dbReference type="Reactome" id="R-MMU-3899300">
    <property type="pathway name" value="SUMOylation of transcription cofactors"/>
</dbReference>
<dbReference type="Reactome" id="R-MMU-9018519">
    <property type="pathway name" value="Estrogen-dependent gene expression"/>
</dbReference>
<dbReference type="BioGRID-ORCS" id="268903">
    <property type="hits" value="6 hits in 80 CRISPR screens"/>
</dbReference>
<dbReference type="ChiTaRS" id="Nrip1">
    <property type="organism name" value="mouse"/>
</dbReference>
<dbReference type="PRO" id="PR:Q8CBD1"/>
<dbReference type="Proteomes" id="UP000000589">
    <property type="component" value="Chromosome 16"/>
</dbReference>
<dbReference type="RNAct" id="Q8CBD1">
    <property type="molecule type" value="protein"/>
</dbReference>
<dbReference type="Bgee" id="ENSMUSG00000048490">
    <property type="expression patterns" value="Expressed in metanephric cortical collecting duct and 283 other cell types or tissues"/>
</dbReference>
<dbReference type="ExpressionAtlas" id="Q8CBD1">
    <property type="expression patterns" value="baseline and differential"/>
</dbReference>
<dbReference type="GO" id="GO:0000785">
    <property type="term" value="C:chromatin"/>
    <property type="evidence" value="ECO:0007669"/>
    <property type="project" value="Ensembl"/>
</dbReference>
<dbReference type="GO" id="GO:0005829">
    <property type="term" value="C:cytosol"/>
    <property type="evidence" value="ECO:0007669"/>
    <property type="project" value="Ensembl"/>
</dbReference>
<dbReference type="GO" id="GO:0001650">
    <property type="term" value="C:fibrillar center"/>
    <property type="evidence" value="ECO:0007669"/>
    <property type="project" value="Ensembl"/>
</dbReference>
<dbReference type="GO" id="GO:0000118">
    <property type="term" value="C:histone deacetylase complex"/>
    <property type="evidence" value="ECO:0000353"/>
    <property type="project" value="UniProtKB"/>
</dbReference>
<dbReference type="GO" id="GO:0016607">
    <property type="term" value="C:nuclear speck"/>
    <property type="evidence" value="ECO:0000314"/>
    <property type="project" value="MGI"/>
</dbReference>
<dbReference type="GO" id="GO:0005634">
    <property type="term" value="C:nucleus"/>
    <property type="evidence" value="ECO:0000314"/>
    <property type="project" value="UniProtKB"/>
</dbReference>
<dbReference type="GO" id="GO:0042826">
    <property type="term" value="F:histone deacetylase binding"/>
    <property type="evidence" value="ECO:0000353"/>
    <property type="project" value="UniProtKB"/>
</dbReference>
<dbReference type="GO" id="GO:0030331">
    <property type="term" value="F:nuclear estrogen receptor binding"/>
    <property type="evidence" value="ECO:0007669"/>
    <property type="project" value="Ensembl"/>
</dbReference>
<dbReference type="GO" id="GO:0035259">
    <property type="term" value="F:nuclear glucocorticoid receptor binding"/>
    <property type="evidence" value="ECO:0007669"/>
    <property type="project" value="Ensembl"/>
</dbReference>
<dbReference type="GO" id="GO:0042974">
    <property type="term" value="F:nuclear retinoic acid receptor binding"/>
    <property type="evidence" value="ECO:0000353"/>
    <property type="project" value="UniProtKB"/>
</dbReference>
<dbReference type="GO" id="GO:0046965">
    <property type="term" value="F:nuclear retinoid X receptor binding"/>
    <property type="evidence" value="ECO:0000353"/>
    <property type="project" value="UniProtKB"/>
</dbReference>
<dbReference type="GO" id="GO:0000978">
    <property type="term" value="F:RNA polymerase II cis-regulatory region sequence-specific DNA binding"/>
    <property type="evidence" value="ECO:0000250"/>
    <property type="project" value="UniProtKB"/>
</dbReference>
<dbReference type="GO" id="GO:0005102">
    <property type="term" value="F:signaling receptor binding"/>
    <property type="evidence" value="ECO:0000353"/>
    <property type="project" value="UniProtKB"/>
</dbReference>
<dbReference type="GO" id="GO:0003713">
    <property type="term" value="F:transcription coactivator activity"/>
    <property type="evidence" value="ECO:0000314"/>
    <property type="project" value="UniProtKB"/>
</dbReference>
<dbReference type="GO" id="GO:0003714">
    <property type="term" value="F:transcription corepressor activity"/>
    <property type="evidence" value="ECO:0000314"/>
    <property type="project" value="UniProtKB"/>
</dbReference>
<dbReference type="GO" id="GO:0071392">
    <property type="term" value="P:cellular response to estradiol stimulus"/>
    <property type="evidence" value="ECO:0007669"/>
    <property type="project" value="Ensembl"/>
</dbReference>
<dbReference type="GO" id="GO:0032922">
    <property type="term" value="P:circadian regulation of gene expression"/>
    <property type="evidence" value="ECO:0000315"/>
    <property type="project" value="UniProtKB"/>
</dbReference>
<dbReference type="GO" id="GO:0019915">
    <property type="term" value="P:lipid storage"/>
    <property type="evidence" value="ECO:0000315"/>
    <property type="project" value="UniProtKB"/>
</dbReference>
<dbReference type="GO" id="GO:0000122">
    <property type="term" value="P:negative regulation of transcription by RNA polymerase II"/>
    <property type="evidence" value="ECO:0000314"/>
    <property type="project" value="MGI"/>
</dbReference>
<dbReference type="GO" id="GO:0001543">
    <property type="term" value="P:ovarian follicle rupture"/>
    <property type="evidence" value="ECO:0000315"/>
    <property type="project" value="UniProtKB"/>
</dbReference>
<dbReference type="GO" id="GO:0030728">
    <property type="term" value="P:ovulation"/>
    <property type="evidence" value="ECO:0000315"/>
    <property type="project" value="UniProtKB"/>
</dbReference>
<dbReference type="GO" id="GO:0045944">
    <property type="term" value="P:positive regulation of transcription by RNA polymerase II"/>
    <property type="evidence" value="ECO:0007669"/>
    <property type="project" value="Ensembl"/>
</dbReference>
<dbReference type="GO" id="GO:0006357">
    <property type="term" value="P:regulation of transcription by RNA polymerase II"/>
    <property type="evidence" value="ECO:0000314"/>
    <property type="project" value="MGI"/>
</dbReference>
<dbReference type="InterPro" id="IPR026649">
    <property type="entry name" value="NRIP1"/>
</dbReference>
<dbReference type="InterPro" id="IPR031405">
    <property type="entry name" value="NRIP1_RD1"/>
</dbReference>
<dbReference type="InterPro" id="IPR031406">
    <property type="entry name" value="NRIP1_RD2"/>
</dbReference>
<dbReference type="InterPro" id="IPR031407">
    <property type="entry name" value="NRIP1_RD3"/>
</dbReference>
<dbReference type="InterPro" id="IPR031408">
    <property type="entry name" value="NRIP1_RD4"/>
</dbReference>
<dbReference type="PANTHER" id="PTHR15088">
    <property type="entry name" value="NUCLEAR FACTOR RIP140"/>
    <property type="match status" value="1"/>
</dbReference>
<dbReference type="PANTHER" id="PTHR15088:SF0">
    <property type="entry name" value="NUCLEAR RECEPTOR-INTERACTING PROTEIN 1"/>
    <property type="match status" value="1"/>
</dbReference>
<dbReference type="Pfam" id="PF15687">
    <property type="entry name" value="NRIP1_repr_1"/>
    <property type="match status" value="1"/>
</dbReference>
<dbReference type="Pfam" id="PF15688">
    <property type="entry name" value="NRIP1_repr_2"/>
    <property type="match status" value="1"/>
</dbReference>
<dbReference type="Pfam" id="PF15689">
    <property type="entry name" value="NRIP1_repr_3"/>
    <property type="match status" value="1"/>
</dbReference>
<dbReference type="Pfam" id="PF15690">
    <property type="entry name" value="NRIP1_repr_4"/>
    <property type="match status" value="1"/>
</dbReference>
<sequence>MTHGEELGSDVHQDSIVLTYLEGLLMHQAAGGSGTAINKKSAGHKEEDQNFNLSGSAFPSCQSNGPTVSTQTYQGSGMLHLKKARLLQSSEDWNAAKRKRLSDSIVNLNVKKEALLAGMVDSVPKGKQDSTLLASLLQSFSSRLQTVALSQQIRQSLKEQGYALSHESLKVEKDLRCYGVASSHLKTLLKKSKTKDQKSGPTLPDVTPNLIRDSFVESSHPAVGQSGTKVMSEPLSCAARLQAVASMVEKRASPAASPKPSVACSQLALLLSSEAHLQQYSREHALKTQNAHQVASERLAAMARLQENGQKDVGSSQLSKGVSGHLNGQARALPASKLVANKNNAATFQSPMGVVPSSPKNTSYKNSLERNNLKQAANNSLLLHLLKSQTIPTPMNGHSQNERASSFESSTPTTIDEYSDNNPSFTDDSSGDESSYSNCVPIDLSCKHRIEKPEAERPVSLENLTQSLLNTWDPKIPGVDIKEDQDTSTNSKLNSHQKVTLLQLLLGHKSEETVERNASPQDIHSDGTKFSPQNYTRTSVIESPSTNRTTPVSTPPLYTASQAESPINLSQHSLVIKWNSPPYACSTPASKLTNTAPSHLMDLTKGKESQAEKPAPSEGAQNSATFSASKLLQNLAQCGLQSSGPGEEQRPCKQLLSGNPDKPLGLIDRLNSPLLSNKTNAAEESKAFSSQPAGPEPGLPGCEIENLLERRTVLQLLLGNSSKGKNEKKEKTPARDEAPQEHSERAANEQILMVKIKSEPCDDFQTHNTNLPLNHDAKSAPFLGVTPAIHRSTAALPVSEDFKSEPASPQDFSFSKNGLLSRLLRQNQESYPADEQDKSHRNSELPTLESKNICMVPKKRKLYTEPLENPFKKMKNTAVDTANHHSGPEVLYGSLLHQEELKFSRNELDYKYPAGHSSASDGDHRSWARESKSFNVLKQLLLSENCVRDLSPHRSDSVPDTKKKGHKNNAPGSKPEFGISSLNGLMYSSPQPGSCVTDHRTFSYPGMVKTPLSPPFPEHLGCVGSRPEPGLLNGCSVPGEKGPIKWVIADMDKNEYEKDSPRLTKTNPILYYMLQKGGGNSVTTQETQDKDIWREPASAESLSQVTVKEELLPAAETKASFFNLRSPYNSHMGNNASRPHSTNGEVYGLLGNALTIKKESE</sequence>
<comment type="function">
    <text evidence="5 6 8 9 12 13 14 15">Modulates transcriptional repression by nuclear hormone receptors such as NR2C1, thyroid hormone receptor and retinoic acid receptor/RARA. Essential for cumulus expansion and follicle rupture during ovulation. Also controls the balance between fat accumulation and energy expenditure. Positive regulator of the circadian clock gene expression: stimulates transcription of BMAL1, CLOCK and CRY1 by acting as a coactivator for RORA and RORC. Involved in the regulation of ovarian function (PubMed:11100122). Plays a role in renal development (PubMed:28381549).</text>
</comment>
<comment type="subunit">
    <text evidence="2 13">Interacts with CTBP1, CTBP2, ERS1, HDAC1, HDAC2, HDAC5, HDAC6, NR2C2, NR3C1, NR3C2, YWHAH, JUN and FOS. Found in a complex with both NR3C1 and YWHAH (By similarity). Interacts with NR2C1 (sumoylated form and via the ligand-binding domain); the interaction results in promoting the repressor activity of NR2C1. Interacts with RARA and RXRB homodimers and RARA/RXRB heterodimers in the presence of ligand. Interacts with HDAC1 and HDAC3 via its N-terminal domain. Interacts with ZNF366 (By similarity). Interacts with RORA.</text>
</comment>
<comment type="interaction">
    <interactant intactId="EBI-1771626">
        <id>Q8CBD1</id>
    </interactant>
    <interactant intactId="EBI-15617004">
        <id>Q505F1</id>
        <label>Nr2c1</label>
    </interactant>
    <organismsDiffer>false</organismsDiffer>
    <experiments>3</experiments>
</comment>
<comment type="interaction">
    <interactant intactId="EBI-1771626">
        <id>Q8CBD1</id>
    </interactant>
    <interactant intactId="EBI-607682">
        <id>O15379</id>
        <label>HDAC3</label>
    </interactant>
    <organismsDiffer>true</organismsDiffer>
    <experiments>2</experiments>
</comment>
<comment type="subcellular location">
    <subcellularLocation>
        <location evidence="11">Nucleus</location>
    </subcellularLocation>
</comment>
<comment type="tissue specificity">
    <text evidence="6 9 15">Expressed in the embryonic placenta. In the adult, expression is strong in the testis and brain. Also expressed at a high level in the white adipose tissue. Expressed constantly but at a weaker level in the adult heart, lung, stomach and kidney. Expressed moderately in the skeletal muscle. Expressed at a low level in the adult spleen, liver and brown adipose tissue. Expressed in the ovary at a high level in granulosa cells and at a lower level in the thecal and interstitial compartments.</text>
</comment>
<comment type="domain">
    <text evidence="1">Contains at least 4 autonomous repression domains (RD1-4).</text>
</comment>
<comment type="domain">
    <text>Contains 9 Leu-Xaa-Xaa-Leu-Leu (LXXLL) motifs, which have different affinities for nuclear receptors.</text>
</comment>
<comment type="domain">
    <text>The Ligand-dependent nuclear receptor binding region is required for ligand-dependent interaction with RAAR and RXRB homo- and heterodimers, for the corepressor activity, and for the formation of an HDAC3 complex with RARA/RXRB.</text>
</comment>
<comment type="PTM">
    <text evidence="2 10 11">Acetylation abolishes interaction with CTBP1. Phosphorylation enhances interaction with YWHAH (By similarity). Acetylation regulates its nuclear translocation and corepressive activity.</text>
</comment>
<comment type="disruption phenotype">
    <text evidence="6 14">Mice are viable and morphologically normal, but smaller than wild-type and heterozygous littermates. Homozygous NRIP1-null mature female are defective in ovulation and completely infertile (PubMed:11100122). Embryos with heterozygous NRIP1 loss show anomalies of the urinary tract including dysplastic kidneys with cystic dilations, severe hydoureter with hydronephrosis and ureterocele (PubMed:28381549).</text>
</comment>
<name>NRIP1_MOUSE</name>
<evidence type="ECO:0000250" key="1"/>
<evidence type="ECO:0000250" key="2">
    <source>
        <dbReference type="UniProtKB" id="P48552"/>
    </source>
</evidence>
<evidence type="ECO:0000255" key="3"/>
<evidence type="ECO:0000256" key="4">
    <source>
        <dbReference type="SAM" id="MobiDB-lite"/>
    </source>
</evidence>
<evidence type="ECO:0000269" key="5">
    <source>
    </source>
</evidence>
<evidence type="ECO:0000269" key="6">
    <source>
    </source>
</evidence>
<evidence type="ECO:0000269" key="7">
    <source>
    </source>
</evidence>
<evidence type="ECO:0000269" key="8">
    <source>
    </source>
</evidence>
<evidence type="ECO:0000269" key="9">
    <source>
    </source>
</evidence>
<evidence type="ECO:0000269" key="10">
    <source>
    </source>
</evidence>
<evidence type="ECO:0000269" key="11">
    <source>
    </source>
</evidence>
<evidence type="ECO:0000269" key="12">
    <source>
    </source>
</evidence>
<evidence type="ECO:0000269" key="13">
    <source>
    </source>
</evidence>
<evidence type="ECO:0000269" key="14">
    <source>
    </source>
</evidence>
<evidence type="ECO:0000269" key="15">
    <source>
    </source>
</evidence>
<evidence type="ECO:0000305" key="16"/>
<evidence type="ECO:0000312" key="17">
    <source>
        <dbReference type="EMBL" id="AAC69611.1"/>
    </source>
</evidence>
<evidence type="ECO:0000312" key="18">
    <source>
        <dbReference type="EMBL" id="AAH60232.1"/>
    </source>
</evidence>
<evidence type="ECO:0000312" key="19">
    <source>
        <dbReference type="EMBL" id="BAC29368.1"/>
    </source>
</evidence>
<evidence type="ECO:0000312" key="20">
    <source>
        <dbReference type="EMBL" id="BAC39197.1"/>
    </source>
</evidence>
<evidence type="ECO:0000312" key="21">
    <source>
        <dbReference type="MGI" id="MGI:1315213"/>
    </source>
</evidence>
<gene>
    <name evidence="21" type="primary">Nrip1</name>
</gene>
<organism>
    <name type="scientific">Mus musculus</name>
    <name type="common">Mouse</name>
    <dbReference type="NCBI Taxonomy" id="10090"/>
    <lineage>
        <taxon>Eukaryota</taxon>
        <taxon>Metazoa</taxon>
        <taxon>Chordata</taxon>
        <taxon>Craniata</taxon>
        <taxon>Vertebrata</taxon>
        <taxon>Euteleostomi</taxon>
        <taxon>Mammalia</taxon>
        <taxon>Eutheria</taxon>
        <taxon>Euarchontoglires</taxon>
        <taxon>Glires</taxon>
        <taxon>Rodentia</taxon>
        <taxon>Myomorpha</taxon>
        <taxon>Muroidea</taxon>
        <taxon>Muridae</taxon>
        <taxon>Murinae</taxon>
        <taxon>Mus</taxon>
        <taxon>Mus</taxon>
    </lineage>
</organism>
<reference evidence="16 17" key="1">
    <citation type="journal article" date="1998" name="Mol. Cell. Biol.">
        <title>Cloning and characterization of mouse RIP140, a corepressor for nuclear orphan receptor TR2.</title>
        <authorList>
            <person name="Lee C.-H."/>
            <person name="Chinpaisal C."/>
            <person name="Wei L.-N."/>
        </authorList>
    </citation>
    <scope>NUCLEOTIDE SEQUENCE [MRNA]</scope>
    <scope>FUNCTION</scope>
    <scope>TISSUE SPECIFICITY</scope>
    <scope>INTERACTION WITH NR2C1 AND RARA</scope>
    <source>
        <strain evidence="17">ICR</strain>
        <tissue evidence="15">Embryo</tissue>
    </source>
</reference>
<reference evidence="19" key="2">
    <citation type="journal article" date="2005" name="Science">
        <title>The transcriptional landscape of the mammalian genome.</title>
        <authorList>
            <person name="Carninci P."/>
            <person name="Kasukawa T."/>
            <person name="Katayama S."/>
            <person name="Gough J."/>
            <person name="Frith M.C."/>
            <person name="Maeda N."/>
            <person name="Oyama R."/>
            <person name="Ravasi T."/>
            <person name="Lenhard B."/>
            <person name="Wells C."/>
            <person name="Kodzius R."/>
            <person name="Shimokawa K."/>
            <person name="Bajic V.B."/>
            <person name="Brenner S.E."/>
            <person name="Batalov S."/>
            <person name="Forrest A.R."/>
            <person name="Zavolan M."/>
            <person name="Davis M.J."/>
            <person name="Wilming L.G."/>
            <person name="Aidinis V."/>
            <person name="Allen J.E."/>
            <person name="Ambesi-Impiombato A."/>
            <person name="Apweiler R."/>
            <person name="Aturaliya R.N."/>
            <person name="Bailey T.L."/>
            <person name="Bansal M."/>
            <person name="Baxter L."/>
            <person name="Beisel K.W."/>
            <person name="Bersano T."/>
            <person name="Bono H."/>
            <person name="Chalk A.M."/>
            <person name="Chiu K.P."/>
            <person name="Choudhary V."/>
            <person name="Christoffels A."/>
            <person name="Clutterbuck D.R."/>
            <person name="Crowe M.L."/>
            <person name="Dalla E."/>
            <person name="Dalrymple B.P."/>
            <person name="de Bono B."/>
            <person name="Della Gatta G."/>
            <person name="di Bernardo D."/>
            <person name="Down T."/>
            <person name="Engstrom P."/>
            <person name="Fagiolini M."/>
            <person name="Faulkner G."/>
            <person name="Fletcher C.F."/>
            <person name="Fukushima T."/>
            <person name="Furuno M."/>
            <person name="Futaki S."/>
            <person name="Gariboldi M."/>
            <person name="Georgii-Hemming P."/>
            <person name="Gingeras T.R."/>
            <person name="Gojobori T."/>
            <person name="Green R.E."/>
            <person name="Gustincich S."/>
            <person name="Harbers M."/>
            <person name="Hayashi Y."/>
            <person name="Hensch T.K."/>
            <person name="Hirokawa N."/>
            <person name="Hill D."/>
            <person name="Huminiecki L."/>
            <person name="Iacono M."/>
            <person name="Ikeo K."/>
            <person name="Iwama A."/>
            <person name="Ishikawa T."/>
            <person name="Jakt M."/>
            <person name="Kanapin A."/>
            <person name="Katoh M."/>
            <person name="Kawasawa Y."/>
            <person name="Kelso J."/>
            <person name="Kitamura H."/>
            <person name="Kitano H."/>
            <person name="Kollias G."/>
            <person name="Krishnan S.P."/>
            <person name="Kruger A."/>
            <person name="Kummerfeld S.K."/>
            <person name="Kurochkin I.V."/>
            <person name="Lareau L.F."/>
            <person name="Lazarevic D."/>
            <person name="Lipovich L."/>
            <person name="Liu J."/>
            <person name="Liuni S."/>
            <person name="McWilliam S."/>
            <person name="Madan Babu M."/>
            <person name="Madera M."/>
            <person name="Marchionni L."/>
            <person name="Matsuda H."/>
            <person name="Matsuzawa S."/>
            <person name="Miki H."/>
            <person name="Mignone F."/>
            <person name="Miyake S."/>
            <person name="Morris K."/>
            <person name="Mottagui-Tabar S."/>
            <person name="Mulder N."/>
            <person name="Nakano N."/>
            <person name="Nakauchi H."/>
            <person name="Ng P."/>
            <person name="Nilsson R."/>
            <person name="Nishiguchi S."/>
            <person name="Nishikawa S."/>
            <person name="Nori F."/>
            <person name="Ohara O."/>
            <person name="Okazaki Y."/>
            <person name="Orlando V."/>
            <person name="Pang K.C."/>
            <person name="Pavan W.J."/>
            <person name="Pavesi G."/>
            <person name="Pesole G."/>
            <person name="Petrovsky N."/>
            <person name="Piazza S."/>
            <person name="Reed J."/>
            <person name="Reid J.F."/>
            <person name="Ring B.Z."/>
            <person name="Ringwald M."/>
            <person name="Rost B."/>
            <person name="Ruan Y."/>
            <person name="Salzberg S.L."/>
            <person name="Sandelin A."/>
            <person name="Schneider C."/>
            <person name="Schoenbach C."/>
            <person name="Sekiguchi K."/>
            <person name="Semple C.A."/>
            <person name="Seno S."/>
            <person name="Sessa L."/>
            <person name="Sheng Y."/>
            <person name="Shibata Y."/>
            <person name="Shimada H."/>
            <person name="Shimada K."/>
            <person name="Silva D."/>
            <person name="Sinclair B."/>
            <person name="Sperling S."/>
            <person name="Stupka E."/>
            <person name="Sugiura K."/>
            <person name="Sultana R."/>
            <person name="Takenaka Y."/>
            <person name="Taki K."/>
            <person name="Tammoja K."/>
            <person name="Tan S.L."/>
            <person name="Tang S."/>
            <person name="Taylor M.S."/>
            <person name="Tegner J."/>
            <person name="Teichmann S.A."/>
            <person name="Ueda H.R."/>
            <person name="van Nimwegen E."/>
            <person name="Verardo R."/>
            <person name="Wei C.L."/>
            <person name="Yagi K."/>
            <person name="Yamanishi H."/>
            <person name="Zabarovsky E."/>
            <person name="Zhu S."/>
            <person name="Zimmer A."/>
            <person name="Hide W."/>
            <person name="Bult C."/>
            <person name="Grimmond S.M."/>
            <person name="Teasdale R.D."/>
            <person name="Liu E.T."/>
            <person name="Brusic V."/>
            <person name="Quackenbush J."/>
            <person name="Wahlestedt C."/>
            <person name="Mattick J.S."/>
            <person name="Hume D.A."/>
            <person name="Kai C."/>
            <person name="Sasaki D."/>
            <person name="Tomaru Y."/>
            <person name="Fukuda S."/>
            <person name="Kanamori-Katayama M."/>
            <person name="Suzuki M."/>
            <person name="Aoki J."/>
            <person name="Arakawa T."/>
            <person name="Iida J."/>
            <person name="Imamura K."/>
            <person name="Itoh M."/>
            <person name="Kato T."/>
            <person name="Kawaji H."/>
            <person name="Kawagashira N."/>
            <person name="Kawashima T."/>
            <person name="Kojima M."/>
            <person name="Kondo S."/>
            <person name="Konno H."/>
            <person name="Nakano K."/>
            <person name="Ninomiya N."/>
            <person name="Nishio T."/>
            <person name="Okada M."/>
            <person name="Plessy C."/>
            <person name="Shibata K."/>
            <person name="Shiraki T."/>
            <person name="Suzuki S."/>
            <person name="Tagami M."/>
            <person name="Waki K."/>
            <person name="Watahiki A."/>
            <person name="Okamura-Oho Y."/>
            <person name="Suzuki H."/>
            <person name="Kawai J."/>
            <person name="Hayashizaki Y."/>
        </authorList>
    </citation>
    <scope>NUCLEOTIDE SEQUENCE [LARGE SCALE MRNA]</scope>
    <source>
        <strain evidence="19">C57BL/6J</strain>
        <strain>NOD</strain>
        <tissue evidence="19">Cerebellum</tissue>
        <tissue evidence="20">Heart</tissue>
        <tissue>Spleen</tissue>
    </source>
</reference>
<reference evidence="18" key="3">
    <citation type="journal article" date="2004" name="Genome Res.">
        <title>The status, quality, and expansion of the NIH full-length cDNA project: the Mammalian Gene Collection (MGC).</title>
        <authorList>
            <consortium name="The MGC Project Team"/>
        </authorList>
    </citation>
    <scope>NUCLEOTIDE SEQUENCE [LARGE SCALE MRNA]</scope>
    <source>
        <strain evidence="18">C57BL/6J</strain>
        <tissue evidence="18">Brain</tissue>
    </source>
</reference>
<reference evidence="16" key="4">
    <citation type="journal article" date="2005" name="Mol. Cell. Proteomics">
        <title>Post-translational modification of nuclear co-repressor receptor-interacting protein 140 by acetylation.</title>
        <authorList>
            <person name="Huq M.D.M."/>
            <person name="Wei L.-N."/>
        </authorList>
    </citation>
    <scope>PROTEIN SEQUENCE OF 101-112; 155-170; 283-298; 305-320; 476-492; 517-537; 606-630 AND 930-938</scope>
    <scope>IDENTIFICATION BY MASS SPECTROMETRY</scope>
    <scope>SUBCELLULAR LOCATION</scope>
    <scope>ACETYLATION AT LYS-111; LYS-158; LYS-287; LYS-311; LYS-482; LYS-529; LYS-607 AND LYS-932</scope>
</reference>
<reference evidence="16" key="5">
    <citation type="journal article" date="2005" name="Proteomics">
        <title>Mapping of phosphorylation sites of nuclear corepressor receptor interacting protein 140 by liquid chromatography-tandem mass spectroscopy.</title>
        <authorList>
            <person name="Huq M.D.M."/>
            <person name="Khan S.A."/>
            <person name="Park S.W."/>
            <person name="Wei L.-N."/>
        </authorList>
    </citation>
    <scope>PROTEIN SEQUENCE OF 101-112; 199-212; 343-360; 375-387; 476-492; 517-548; 670-678 AND 1001-1009</scope>
    <scope>IDENTIFICATION BY MASS SPECTROMETRY</scope>
    <scope>PHOSPHORYLATION AT SER-104; THR-207; SER-358; SER-380; SER-488; SER-519; SER-531; SER-543; SER-672 AND SER-1003</scope>
</reference>
<reference evidence="16" key="6">
    <citation type="journal article" date="1999" name="J. Biol. Chem.">
        <title>Characterization of receptor-interacting protein 140 in retinoid receptor activities.</title>
        <authorList>
            <person name="Lee C.-H."/>
            <person name="Wei L.-N."/>
        </authorList>
    </citation>
    <scope>FUNCTION</scope>
    <scope>INTERACTION WITH RARA AND RXRB</scope>
</reference>
<reference evidence="16" key="7">
    <citation type="journal article" date="2000" name="J. Biol. Chem.">
        <title>Receptor-interacting protein 140 directly recruits histone deacetylases for gene silencing.</title>
        <authorList>
            <person name="Wei L.-N."/>
            <person name="Hu X."/>
            <person name="Chandra D."/>
            <person name="Seto E."/>
            <person name="Farooqui M."/>
        </authorList>
    </citation>
    <scope>INTERACTION WITH HDAC1 AND HDAC3</scope>
</reference>
<reference evidence="16" key="8">
    <citation type="journal article" date="2000" name="Nat. Med.">
        <title>The nuclear receptor co-repressor Nrip1 (RIP140) is essential for female fertility.</title>
        <authorList>
            <person name="White R."/>
            <person name="Leonardsson G."/>
            <person name="Rosewell I."/>
            <person name="Jacobs M.A."/>
            <person name="Milligan S."/>
            <person name="Parker M.G."/>
        </authorList>
    </citation>
    <scope>FUNCTION</scope>
    <scope>TISSUE SPECIFICITY</scope>
    <scope>DISRUPTION PHENOTYPE</scope>
</reference>
<reference evidence="16" key="9">
    <citation type="journal article" date="2001" name="J. Biol. Chem.">
        <title>Ligand-dependent formation of retinoid receptors, receptor-interacting protein 140 (RIP140), and histone deacetylase complex is mediated by a novel receptor-interacting motif of RIP140.</title>
        <authorList>
            <person name="Wei L.-N."/>
            <person name="Farooqui M."/>
            <person name="Hu X."/>
        </authorList>
    </citation>
    <scope>INTERACTION WITH RARA AND RXRB</scope>
    <scope>IDENTIFICATION IN A COMPLEX WITH HDAC3</scope>
</reference>
<reference evidence="16" key="10">
    <citation type="journal article" date="2003" name="Biochemistry">
        <title>Effects of retinoid ligands on RIP140: molecular interaction with retinoid receptors and biological activity.</title>
        <authorList>
            <person name="Farooqui M."/>
            <person name="Franco P.J."/>
            <person name="Thompson J."/>
            <person name="Kagechika H."/>
            <person name="Chandraratna R.A.S."/>
            <person name="Banaszak L."/>
            <person name="Wei L.-N."/>
        </authorList>
    </citation>
    <scope>INTERACTION WITH RARA AND RXRB</scope>
    <scope>MUTAGENESIS OF ASN-1067; PRO-1068 AND MET-1073</scope>
</reference>
<reference evidence="16" key="11">
    <citation type="journal article" date="2004" name="Mol. Cell. Endocrinol.">
        <title>Receptor interacting protein 140 as a thyroid hormone-dependent, negative co-regulator for the induction of cellular retinoic acid binding protein I gene.</title>
        <authorList>
            <person name="Wei L.-N."/>
            <person name="Hu X."/>
        </authorList>
    </citation>
    <scope>FUNCTION</scope>
</reference>
<reference evidence="16" key="12">
    <citation type="journal article" date="2004" name="Proc. Natl. Acad. Sci. U.S.A.">
        <title>Nuclear receptor corepressor RIP140 regulates fat accumulation.</title>
        <authorList>
            <person name="Leonardsson G."/>
            <person name="Steel J.H."/>
            <person name="Christian M."/>
            <person name="Pocock V."/>
            <person name="Milligan S."/>
            <person name="Bell J."/>
            <person name="So P.-W."/>
            <person name="Medina-Gomez G."/>
            <person name="Vidal-Puig A."/>
            <person name="White R."/>
            <person name="Parker M.G."/>
        </authorList>
    </citation>
    <scope>FUNCTION</scope>
    <scope>TISSUE SPECIFICITY</scope>
</reference>
<reference evidence="16" key="13">
    <citation type="journal article" date="2005" name="Endocrinology">
        <title>Multiple signaling defects in the absence of RIP140 impair both cumulus expansion and follicle rupture.</title>
        <authorList>
            <person name="Tullet J.M.A."/>
            <person name="Pocock V."/>
            <person name="Steel J.H."/>
            <person name="White R."/>
            <person name="Milligan S."/>
            <person name="Parker M.G."/>
        </authorList>
    </citation>
    <scope>FUNCTION</scope>
</reference>
<reference key="14">
    <citation type="journal article" date="2007" name="Nat. Struct. Mol. Biol.">
        <title>SUMOylation of Tr2 orphan receptor involves Pml and fine-tunes Oct4 expression in stem cells.</title>
        <authorList>
            <person name="Park S.W."/>
            <person name="Hu X."/>
            <person name="Gupta P."/>
            <person name="Lin Y.P."/>
            <person name="Ha S.G."/>
            <person name="Wei L.N."/>
        </authorList>
    </citation>
    <scope>INTERACTION WITH NR2C1</scope>
</reference>
<reference key="15">
    <citation type="journal article" date="2008" name="Proc. Natl. Acad. Sci. U.S.A.">
        <title>Retinoic acid-stimulated sequential phosphorylation, PML recruitment, and SUMOylation of nuclear receptor TR2 to suppress Oct4 expression.</title>
        <authorList>
            <person name="Gupta P."/>
            <person name="Ho P.C."/>
            <person name="Huq M.M."/>
            <person name="Ha S.G."/>
            <person name="Park S.W."/>
            <person name="Khan A.A."/>
            <person name="Tsai N.P."/>
            <person name="Wei L.N."/>
        </authorList>
    </citation>
    <scope>INTERACTION WITH NR2C1</scope>
</reference>
<reference key="16">
    <citation type="journal article" date="2011" name="J. Biol. Rhythms">
        <title>Modulation of clock gene expression by the transcriptional coregulator receptor interacting protein 140 (RIP140).</title>
        <authorList>
            <person name="Poliandri A.H."/>
            <person name="Gamsby J.J."/>
            <person name="Christian M."/>
            <person name="Spinella M.J."/>
            <person name="Loros J.J."/>
            <person name="Dunlap J.C."/>
            <person name="Parker M.G."/>
        </authorList>
    </citation>
    <scope>FUNCTION</scope>
    <scope>INTERACTION WITH RORA</scope>
</reference>
<reference key="17">
    <citation type="journal article" date="2017" name="J. Am. Soc. Nephrol.">
        <title>A dominant mutation in nuclear receptor interacting protein 1 causes urinary tract malformations via dysregulation of retinoic acid signaling.</title>
        <authorList>
            <person name="Vivante A."/>
            <person name="Mann N."/>
            <person name="Yonath H."/>
            <person name="Weiss A.C."/>
            <person name="Getwan M."/>
            <person name="Kaminski M.M."/>
            <person name="Bohnenpoll T."/>
            <person name="Teyssier C."/>
            <person name="Chen J."/>
            <person name="Shril S."/>
            <person name="van der Ven A.T."/>
            <person name="Ityel H."/>
            <person name="Schmidt J.M."/>
            <person name="Widmeier E."/>
            <person name="Bauer S.B."/>
            <person name="Sanna-Cherchi S."/>
            <person name="Gharavi A.G."/>
            <person name="Lu W."/>
            <person name="Magen D."/>
            <person name="Shukrun R."/>
            <person name="Lifton R.P."/>
            <person name="Tasic V."/>
            <person name="Stanescu H.C."/>
            <person name="Cavailles V."/>
            <person name="Kleta R."/>
            <person name="Anikster Y."/>
            <person name="Dekel B."/>
            <person name="Kispert A."/>
            <person name="Lienkamp S.S."/>
            <person name="Hildebrandt F."/>
        </authorList>
    </citation>
    <scope>FUNCTION</scope>
    <scope>DISRUPTION PHENOTYPE</scope>
</reference>
<accession>Q8CBD1</accession>
<accession>Q3U166</accession>
<accession>Q8C3Y8</accession>
<accession>Q9Z2K2</accession>
<protein>
    <recommendedName>
        <fullName>Nuclear receptor-interacting protein 1</fullName>
    </recommendedName>
    <alternativeName>
        <fullName>Nuclear factor RIP140</fullName>
    </alternativeName>
    <alternativeName>
        <fullName>Receptor-interacting protein 140</fullName>
    </alternativeName>
</protein>
<keyword id="KW-0007">Acetylation</keyword>
<keyword id="KW-0010">Activator</keyword>
<keyword id="KW-0090">Biological rhythms</keyword>
<keyword id="KW-0903">Direct protein sequencing</keyword>
<keyword id="KW-1017">Isopeptide bond</keyword>
<keyword id="KW-0539">Nucleus</keyword>
<keyword id="KW-0597">Phosphoprotein</keyword>
<keyword id="KW-0675">Receptor</keyword>
<keyword id="KW-1185">Reference proteome</keyword>
<keyword id="KW-0677">Repeat</keyword>
<keyword id="KW-0678">Repressor</keyword>
<keyword id="KW-0804">Transcription</keyword>
<keyword id="KW-0805">Transcription regulation</keyword>
<keyword id="KW-0832">Ubl conjugation</keyword>
<proteinExistence type="evidence at protein level"/>